<organism>
    <name type="scientific">Dehalococcoides mccartyi (strain CBDB1)</name>
    <dbReference type="NCBI Taxonomy" id="255470"/>
    <lineage>
        <taxon>Bacteria</taxon>
        <taxon>Bacillati</taxon>
        <taxon>Chloroflexota</taxon>
        <taxon>Dehalococcoidia</taxon>
        <taxon>Dehalococcoidales</taxon>
        <taxon>Dehalococcoidaceae</taxon>
        <taxon>Dehalococcoides</taxon>
    </lineage>
</organism>
<sequence length="200" mass="22053">MISPENVVPMVIESSARGERAFDIYSLLLKERIIFLGSQINDQVANLVIAQLLFLDREDPDKDISLYIHSPGGVISAGLAMYDTMQLIRPKVSTICVGVAASMATVLLCAGAKGKRYALPNATIHMHQAMGGAQGQASDIEIAAREIMRQQDILRNILVKHTGQTMEKIVHDSDRDYYLSAQQAVEYGLIDEILQKPENK</sequence>
<proteinExistence type="inferred from homology"/>
<feature type="chain" id="PRO_0000226445" description="ATP-dependent Clp protease proteolytic subunit">
    <location>
        <begin position="1"/>
        <end position="200"/>
    </location>
</feature>
<feature type="active site" description="Nucleophile" evidence="1">
    <location>
        <position position="102"/>
    </location>
</feature>
<feature type="active site" evidence="1">
    <location>
        <position position="127"/>
    </location>
</feature>
<gene>
    <name evidence="1" type="primary">clpP</name>
    <name type="ordered locus">cbdbA666</name>
</gene>
<reference key="1">
    <citation type="journal article" date="2005" name="Nat. Biotechnol.">
        <title>Genome sequence of the chlorinated compound-respiring bacterium Dehalococcoides species strain CBDB1.</title>
        <authorList>
            <person name="Kube M."/>
            <person name="Beck A."/>
            <person name="Zinder S.H."/>
            <person name="Kuhl H."/>
            <person name="Reinhardt R."/>
            <person name="Adrian L."/>
        </authorList>
    </citation>
    <scope>NUCLEOTIDE SEQUENCE [LARGE SCALE GENOMIC DNA]</scope>
    <source>
        <strain>CBDB1</strain>
    </source>
</reference>
<comment type="function">
    <text evidence="1">Cleaves peptides in various proteins in a process that requires ATP hydrolysis. Has a chymotrypsin-like activity. Plays a major role in the degradation of misfolded proteins.</text>
</comment>
<comment type="catalytic activity">
    <reaction evidence="1">
        <text>Hydrolysis of proteins to small peptides in the presence of ATP and magnesium. alpha-casein is the usual test substrate. In the absence of ATP, only oligopeptides shorter than five residues are hydrolyzed (such as succinyl-Leu-Tyr-|-NHMec, and Leu-Tyr-Leu-|-Tyr-Trp, in which cleavage of the -Tyr-|-Leu- and -Tyr-|-Trp bonds also occurs).</text>
        <dbReference type="EC" id="3.4.21.92"/>
    </reaction>
</comment>
<comment type="subunit">
    <text evidence="1">Fourteen ClpP subunits assemble into 2 heptameric rings which stack back to back to give a disk-like structure with a central cavity, resembling the structure of eukaryotic proteasomes.</text>
</comment>
<comment type="subcellular location">
    <subcellularLocation>
        <location evidence="1">Cytoplasm</location>
    </subcellularLocation>
</comment>
<comment type="similarity">
    <text evidence="1">Belongs to the peptidase S14 family.</text>
</comment>
<evidence type="ECO:0000255" key="1">
    <source>
        <dbReference type="HAMAP-Rule" id="MF_00444"/>
    </source>
</evidence>
<name>CLPP_DEHMC</name>
<accession>Q3ZX82</accession>
<dbReference type="EC" id="3.4.21.92" evidence="1"/>
<dbReference type="EMBL" id="AJ965256">
    <property type="protein sequence ID" value="CAI82832.1"/>
    <property type="molecule type" value="Genomic_DNA"/>
</dbReference>
<dbReference type="RefSeq" id="WP_011309183.1">
    <property type="nucleotide sequence ID" value="NC_007356.1"/>
</dbReference>
<dbReference type="SMR" id="Q3ZX82"/>
<dbReference type="MEROPS" id="S14.001"/>
<dbReference type="KEGG" id="deh:cbdbA666"/>
<dbReference type="HOGENOM" id="CLU_058707_3_2_0"/>
<dbReference type="Proteomes" id="UP000000433">
    <property type="component" value="Chromosome"/>
</dbReference>
<dbReference type="GO" id="GO:0005737">
    <property type="term" value="C:cytoplasm"/>
    <property type="evidence" value="ECO:0007669"/>
    <property type="project" value="UniProtKB-SubCell"/>
</dbReference>
<dbReference type="GO" id="GO:0009368">
    <property type="term" value="C:endopeptidase Clp complex"/>
    <property type="evidence" value="ECO:0007669"/>
    <property type="project" value="TreeGrafter"/>
</dbReference>
<dbReference type="GO" id="GO:0004176">
    <property type="term" value="F:ATP-dependent peptidase activity"/>
    <property type="evidence" value="ECO:0007669"/>
    <property type="project" value="InterPro"/>
</dbReference>
<dbReference type="GO" id="GO:0051117">
    <property type="term" value="F:ATPase binding"/>
    <property type="evidence" value="ECO:0007669"/>
    <property type="project" value="TreeGrafter"/>
</dbReference>
<dbReference type="GO" id="GO:0004252">
    <property type="term" value="F:serine-type endopeptidase activity"/>
    <property type="evidence" value="ECO:0007669"/>
    <property type="project" value="UniProtKB-UniRule"/>
</dbReference>
<dbReference type="GO" id="GO:0006515">
    <property type="term" value="P:protein quality control for misfolded or incompletely synthesized proteins"/>
    <property type="evidence" value="ECO:0007669"/>
    <property type="project" value="TreeGrafter"/>
</dbReference>
<dbReference type="CDD" id="cd07017">
    <property type="entry name" value="S14_ClpP_2"/>
    <property type="match status" value="1"/>
</dbReference>
<dbReference type="FunFam" id="3.90.226.10:FF:000001">
    <property type="entry name" value="ATP-dependent Clp protease proteolytic subunit"/>
    <property type="match status" value="1"/>
</dbReference>
<dbReference type="Gene3D" id="3.90.226.10">
    <property type="entry name" value="2-enoyl-CoA Hydratase, Chain A, domain 1"/>
    <property type="match status" value="1"/>
</dbReference>
<dbReference type="HAMAP" id="MF_00444">
    <property type="entry name" value="ClpP"/>
    <property type="match status" value="1"/>
</dbReference>
<dbReference type="InterPro" id="IPR001907">
    <property type="entry name" value="ClpP"/>
</dbReference>
<dbReference type="InterPro" id="IPR029045">
    <property type="entry name" value="ClpP/crotonase-like_dom_sf"/>
</dbReference>
<dbReference type="InterPro" id="IPR023562">
    <property type="entry name" value="ClpP/TepA"/>
</dbReference>
<dbReference type="InterPro" id="IPR018215">
    <property type="entry name" value="ClpP_Ser_AS"/>
</dbReference>
<dbReference type="NCBIfam" id="NF001368">
    <property type="entry name" value="PRK00277.1"/>
    <property type="match status" value="1"/>
</dbReference>
<dbReference type="NCBIfam" id="NF009205">
    <property type="entry name" value="PRK12553.1"/>
    <property type="match status" value="1"/>
</dbReference>
<dbReference type="PANTHER" id="PTHR10381">
    <property type="entry name" value="ATP-DEPENDENT CLP PROTEASE PROTEOLYTIC SUBUNIT"/>
    <property type="match status" value="1"/>
</dbReference>
<dbReference type="PANTHER" id="PTHR10381:SF70">
    <property type="entry name" value="ATP-DEPENDENT CLP PROTEASE PROTEOLYTIC SUBUNIT"/>
    <property type="match status" value="1"/>
</dbReference>
<dbReference type="Pfam" id="PF00574">
    <property type="entry name" value="CLP_protease"/>
    <property type="match status" value="1"/>
</dbReference>
<dbReference type="PRINTS" id="PR00127">
    <property type="entry name" value="CLPPROTEASEP"/>
</dbReference>
<dbReference type="SUPFAM" id="SSF52096">
    <property type="entry name" value="ClpP/crotonase"/>
    <property type="match status" value="1"/>
</dbReference>
<dbReference type="PROSITE" id="PS00381">
    <property type="entry name" value="CLP_PROTEASE_SER"/>
    <property type="match status" value="1"/>
</dbReference>
<keyword id="KW-0963">Cytoplasm</keyword>
<keyword id="KW-0378">Hydrolase</keyword>
<keyword id="KW-0645">Protease</keyword>
<keyword id="KW-0720">Serine protease</keyword>
<protein>
    <recommendedName>
        <fullName evidence="1">ATP-dependent Clp protease proteolytic subunit</fullName>
        <ecNumber evidence="1">3.4.21.92</ecNumber>
    </recommendedName>
    <alternativeName>
        <fullName evidence="1">Endopeptidase Clp</fullName>
    </alternativeName>
</protein>